<reference key="1">
    <citation type="online journal article" date="1995" name="Plant Gene Register">
        <title>Nucleotide sequences of cDNAs encoding S2- and S4-RNases from Japanese pear (Pyrus pyrifolia Nakai 1).</title>
        <authorList>
            <person name="Norioka N."/>
            <person name="Ohnishi Y."/>
            <person name="Norioka S."/>
            <person name="Ishimizu T."/>
            <person name="Nakanishi T."/>
            <person name="Sakiyama F."/>
        </authorList>
        <locator>PGR95-020</locator>
    </citation>
    <scope>NUCLEOTIDE SEQUENCE [MRNA]</scope>
    <source>
        <strain>cv. Nijisseiki</strain>
        <tissue>Style</tissue>
    </source>
</reference>
<reference key="2">
    <citation type="journal article" date="1996" name="J. Biochem.">
        <title>Molecular cloning and nucleotide sequences of cDNAs encoding S-allele specific stylar RNases in a self-incompatible cultivar and its self-compatible mutant of Japanese pear, Pyrus pyrifolia Nakai.</title>
        <authorList>
            <person name="Norioka N."/>
            <person name="Norioka S."/>
            <person name="Ohnishi Y."/>
            <person name="Ishimizu T."/>
            <person name="Oneyama C."/>
            <person name="Nakanishi T."/>
            <person name="Sakiyama F."/>
        </authorList>
    </citation>
    <scope>NUCLEOTIDE SEQUENCE [MRNA] OF 28-204</scope>
    <source>
        <strain>cv. Nijisseiki</strain>
    </source>
</reference>
<reference key="3">
    <citation type="journal article" date="1999" name="Eur. J. Biochem.">
        <title>Presence of asparagine-linked N-acetylglucosamine and chitobiose in Pyrus pyrifolia S-RNases associated with gametophytic self-incompatibility.</title>
        <authorList>
            <person name="Ishimizu T."/>
            <person name="Mitsukami Y."/>
            <person name="Shinkawa T."/>
            <person name="Natsuka S."/>
            <person name="Hase S."/>
            <person name="Miyagi M."/>
            <person name="Sakiyama F."/>
            <person name="Norioka S."/>
        </authorList>
    </citation>
    <scope>GLYCOSYLATION AT ASN-91; ASN-137; ASN-153 AND ASN-195</scope>
    <scope>STRUCTURE OF CARBOHYDRATES</scope>
    <source>
        <strain>cv. Nijisseiki</strain>
        <tissue>Style</tissue>
    </source>
</reference>
<feature type="signal peptide" evidence="4">
    <location>
        <begin position="1"/>
        <end position="20"/>
    </location>
</feature>
<feature type="chain" id="PRO_0000030978" description="Ribonuclease S-2">
    <location>
        <begin position="21"/>
        <end position="221"/>
    </location>
</feature>
<feature type="active site" description="Proton donor" evidence="3 6">
    <location>
        <position position="55"/>
    </location>
</feature>
<feature type="active site" evidence="1">
    <location>
        <position position="105"/>
    </location>
</feature>
<feature type="active site" description="Proton acceptor" evidence="3 6">
    <location>
        <position position="109"/>
    </location>
</feature>
<feature type="binding site" evidence="2">
    <location>
        <position position="31"/>
    </location>
    <ligand>
        <name>RNA</name>
        <dbReference type="ChEBI" id="CHEBI:33697"/>
    </ligand>
    <ligandPart>
        <name>a 3'-terminal ribonucleotide 3'-phosphate residue</name>
        <dbReference type="ChEBI" id="CHEBI:83062"/>
    </ligandPart>
</feature>
<feature type="binding site" evidence="2">
    <location>
        <position position="55"/>
    </location>
    <ligand>
        <name>RNA</name>
        <dbReference type="ChEBI" id="CHEBI:33697"/>
    </ligand>
    <ligandPart>
        <name>a 3'-terminal ribonucleotide 3'-phosphate residue</name>
        <dbReference type="ChEBI" id="CHEBI:83062"/>
    </ligandPart>
</feature>
<feature type="binding site" evidence="2">
    <location>
        <begin position="91"/>
        <end position="92"/>
    </location>
    <ligand>
        <name>RNA</name>
        <dbReference type="ChEBI" id="CHEBI:33697"/>
    </ligand>
    <ligandPart>
        <name>a 3'-terminal ribonucleotide 3'-phosphate residue</name>
        <dbReference type="ChEBI" id="CHEBI:83062"/>
    </ligandPart>
</feature>
<feature type="binding site" evidence="2">
    <location>
        <position position="101"/>
    </location>
    <ligand>
        <name>RNA</name>
        <dbReference type="ChEBI" id="CHEBI:33697"/>
    </ligand>
    <ligandPart>
        <name>a 3'-terminal ribonucleotide 3'-phosphate residue</name>
        <dbReference type="ChEBI" id="CHEBI:83062"/>
    </ligandPart>
</feature>
<feature type="binding site" evidence="2">
    <location>
        <begin position="104"/>
        <end position="105"/>
    </location>
    <ligand>
        <name>RNA</name>
        <dbReference type="ChEBI" id="CHEBI:33697"/>
    </ligand>
    <ligandPart>
        <name>a 3'-terminal ribonucleotide 3'-phosphate residue</name>
        <dbReference type="ChEBI" id="CHEBI:83062"/>
    </ligandPart>
</feature>
<feature type="binding site" evidence="2">
    <location>
        <begin position="108"/>
        <end position="109"/>
    </location>
    <ligand>
        <name>RNA</name>
        <dbReference type="ChEBI" id="CHEBI:33697"/>
    </ligand>
    <ligandPart>
        <name>a 3'-terminal ribonucleotide 3'-phosphate residue</name>
        <dbReference type="ChEBI" id="CHEBI:83062"/>
    </ligandPart>
</feature>
<feature type="glycosylation site" description="N-linked (GlcNAc...) asparagine" evidence="5 8">
    <location>
        <position position="91"/>
    </location>
</feature>
<feature type="glycosylation site" description="N-linked (GlcNAc...) asparagine" evidence="5 8">
    <location>
        <position position="137"/>
    </location>
</feature>
<feature type="glycosylation site" description="N-linked (GlcNAc...) asparagine" evidence="5 8">
    <location>
        <position position="153"/>
    </location>
</feature>
<feature type="glycosylation site" description="N-linked (GlcNAc...) asparagine" evidence="5 8">
    <location>
        <position position="195"/>
    </location>
</feature>
<feature type="disulfide bond" evidence="3">
    <location>
        <begin position="37"/>
        <end position="44"/>
    </location>
</feature>
<feature type="disulfide bond" evidence="1">
    <location>
        <begin position="70"/>
        <end position="112"/>
    </location>
</feature>
<feature type="disulfide bond" evidence="1">
    <location>
        <begin position="176"/>
        <end position="214"/>
    </location>
</feature>
<feature type="disulfide bond" evidence="2">
    <location>
        <begin position="191"/>
        <end position="202"/>
    </location>
</feature>
<protein>
    <recommendedName>
        <fullName>Ribonuclease S-2</fullName>
        <ecNumber evidence="7">4.6.1.19</ecNumber>
    </recommendedName>
    <alternativeName>
        <fullName>S2-RNase</fullName>
    </alternativeName>
</protein>
<sequence>MIYIFTMVFSLNVLILSSSAARYDYFQFTQQYQQAFCNSNPTPCKDPPDKLFTVHGLWPSTKVGRDPEYCKTKRYRKIQRLEPQLEIIWPNVSDRKANRGFWRKQWYKHGSCASPALPNQKHYFETVIRMFLAEKQNVSRILSMATIEPEGKNRTLLEIQNAIRAGTNNMIPKLKCQKVNGMTELVEVTLCHDSNLTQFINCPRPLPQASPYFCPIDDIQY</sequence>
<evidence type="ECO:0000250" key="1">
    <source>
        <dbReference type="UniProtKB" id="P08056"/>
    </source>
</evidence>
<evidence type="ECO:0000250" key="2">
    <source>
        <dbReference type="UniProtKB" id="P23540"/>
    </source>
</evidence>
<evidence type="ECO:0000250" key="3">
    <source>
        <dbReference type="UniProtKB" id="Q7SID5"/>
    </source>
</evidence>
<evidence type="ECO:0000255" key="4"/>
<evidence type="ECO:0000255" key="5">
    <source>
        <dbReference type="PROSITE-ProRule" id="PRU00498"/>
    </source>
</evidence>
<evidence type="ECO:0000255" key="6">
    <source>
        <dbReference type="PROSITE-ProRule" id="PRU10045"/>
    </source>
</evidence>
<evidence type="ECO:0000255" key="7">
    <source>
        <dbReference type="PROSITE-ProRule" id="PRU10046"/>
    </source>
</evidence>
<evidence type="ECO:0000269" key="8">
    <source>
    </source>
</evidence>
<evidence type="ECO:0000305" key="9"/>
<dbReference type="EC" id="4.6.1.19" evidence="7"/>
<dbReference type="EMBL" id="D49527">
    <property type="protein sequence ID" value="BAA08473.1"/>
    <property type="molecule type" value="mRNA"/>
</dbReference>
<dbReference type="SMR" id="Q40965"/>
<dbReference type="iPTMnet" id="Q40965"/>
<dbReference type="GO" id="GO:0005576">
    <property type="term" value="C:extracellular region"/>
    <property type="evidence" value="ECO:0007669"/>
    <property type="project" value="UniProtKB-SubCell"/>
</dbReference>
<dbReference type="GO" id="GO:0033897">
    <property type="term" value="F:ribonuclease T2 activity"/>
    <property type="evidence" value="ECO:0007669"/>
    <property type="project" value="UniProtKB-EC"/>
</dbReference>
<dbReference type="GO" id="GO:0003723">
    <property type="term" value="F:RNA binding"/>
    <property type="evidence" value="ECO:0007669"/>
    <property type="project" value="InterPro"/>
</dbReference>
<dbReference type="GO" id="GO:0006401">
    <property type="term" value="P:RNA catabolic process"/>
    <property type="evidence" value="ECO:0007669"/>
    <property type="project" value="UniProtKB-ARBA"/>
</dbReference>
<dbReference type="CDD" id="cd01061">
    <property type="entry name" value="RNase_T2_euk"/>
    <property type="match status" value="1"/>
</dbReference>
<dbReference type="Gene3D" id="3.90.730.10">
    <property type="entry name" value="Ribonuclease T2-like"/>
    <property type="match status" value="1"/>
</dbReference>
<dbReference type="InterPro" id="IPR033697">
    <property type="entry name" value="Ribonuclease_T2_eukaryotic"/>
</dbReference>
<dbReference type="InterPro" id="IPR001568">
    <property type="entry name" value="RNase_T2-like"/>
</dbReference>
<dbReference type="InterPro" id="IPR036430">
    <property type="entry name" value="RNase_T2-like_sf"/>
</dbReference>
<dbReference type="InterPro" id="IPR018188">
    <property type="entry name" value="RNase_T2_His_AS_1"/>
</dbReference>
<dbReference type="PANTHER" id="PTHR11240">
    <property type="entry name" value="RIBONUCLEASE T2"/>
    <property type="match status" value="1"/>
</dbReference>
<dbReference type="PANTHER" id="PTHR11240:SF22">
    <property type="entry name" value="RIBONUCLEASE T2"/>
    <property type="match status" value="1"/>
</dbReference>
<dbReference type="Pfam" id="PF00445">
    <property type="entry name" value="Ribonuclease_T2"/>
    <property type="match status" value="1"/>
</dbReference>
<dbReference type="SUPFAM" id="SSF55895">
    <property type="entry name" value="Ribonuclease Rh-like"/>
    <property type="match status" value="1"/>
</dbReference>
<dbReference type="PROSITE" id="PS00530">
    <property type="entry name" value="RNASE_T2_1"/>
    <property type="match status" value="1"/>
</dbReference>
<keyword id="KW-1015">Disulfide bond</keyword>
<keyword id="KW-0255">Endonuclease</keyword>
<keyword id="KW-0325">Glycoprotein</keyword>
<keyword id="KW-0378">Hydrolase</keyword>
<keyword id="KW-0456">Lyase</keyword>
<keyword id="KW-0540">Nuclease</keyword>
<keyword id="KW-0964">Secreted</keyword>
<keyword id="KW-0732">Signal</keyword>
<accession>Q40965</accession>
<organism>
    <name type="scientific">Pyrus pyrifolia</name>
    <name type="common">Chinese pear</name>
    <name type="synonym">Pyrus serotina</name>
    <dbReference type="NCBI Taxonomy" id="3767"/>
    <lineage>
        <taxon>Eukaryota</taxon>
        <taxon>Viridiplantae</taxon>
        <taxon>Streptophyta</taxon>
        <taxon>Embryophyta</taxon>
        <taxon>Tracheophyta</taxon>
        <taxon>Spermatophyta</taxon>
        <taxon>Magnoliopsida</taxon>
        <taxon>eudicotyledons</taxon>
        <taxon>Gunneridae</taxon>
        <taxon>Pentapetalae</taxon>
        <taxon>rosids</taxon>
        <taxon>fabids</taxon>
        <taxon>Rosales</taxon>
        <taxon>Rosaceae</taxon>
        <taxon>Amygdaloideae</taxon>
        <taxon>Maleae</taxon>
        <taxon>Pyrus</taxon>
    </lineage>
</organism>
<name>RNS2_PYRPY</name>
<proteinExistence type="evidence at protein level"/>
<comment type="function">
    <text>Self-incompatibility (SI) is the inherited ability of a flowering plant to prevent self-fertilization by discriminating between self and non-self pollen during pollination. In many species, self-incompatibility is controlled by the single, multiallelic locus S.</text>
</comment>
<comment type="catalytic activity">
    <reaction evidence="6">
        <text>a ribonucleotidyl-ribonucleotide-RNA + H2O = a 3'-end 3'-phospho-ribonucleotide-RNA + a 5'-end dephospho-ribonucleoside-RNA + H(+)</text>
        <dbReference type="Rhea" id="RHEA:68052"/>
        <dbReference type="Rhea" id="RHEA-COMP:10463"/>
        <dbReference type="Rhea" id="RHEA-COMP:13936"/>
        <dbReference type="Rhea" id="RHEA-COMP:17355"/>
        <dbReference type="ChEBI" id="CHEBI:15377"/>
        <dbReference type="ChEBI" id="CHEBI:15378"/>
        <dbReference type="ChEBI" id="CHEBI:83062"/>
        <dbReference type="ChEBI" id="CHEBI:138284"/>
        <dbReference type="ChEBI" id="CHEBI:173118"/>
        <dbReference type="EC" id="4.6.1.19"/>
    </reaction>
</comment>
<comment type="subcellular location">
    <subcellularLocation>
        <location>Secreted</location>
        <location>Extracellular space</location>
    </subcellularLocation>
</comment>
<comment type="PTM">
    <text evidence="8">N-linked core structure at Asn-91, Asn-137, and Asn-153 contains xylose and at Asn-195 contains xylose and fucose.</text>
</comment>
<comment type="similarity">
    <text evidence="9">Belongs to the RNase T2 family.</text>
</comment>
<comment type="caution">
    <text evidence="9">Gln-105 is present instead of the conserved Glu which is expected to act as an active site proton donor.</text>
</comment>